<evidence type="ECO:0000250" key="1">
    <source>
        <dbReference type="UniProtKB" id="Q31S42"/>
    </source>
</evidence>
<evidence type="ECO:0000255" key="2">
    <source>
        <dbReference type="PROSITE-ProRule" id="PRU00169"/>
    </source>
</evidence>
<evidence type="ECO:0000255" key="3">
    <source>
        <dbReference type="PROSITE-ProRule" id="PRU01091"/>
    </source>
</evidence>
<evidence type="ECO:0000269" key="4">
    <source>
    </source>
</evidence>
<evidence type="ECO:0000269" key="5">
    <source>
    </source>
</evidence>
<evidence type="ECO:0000269" key="6">
    <source>
    </source>
</evidence>
<evidence type="ECO:0000269" key="7">
    <source>
    </source>
</evidence>
<evidence type="ECO:0000269" key="8">
    <source>
    </source>
</evidence>
<evidence type="ECO:0000269" key="9">
    <source>
    </source>
</evidence>
<evidence type="ECO:0000303" key="10">
    <source>
    </source>
</evidence>
<evidence type="ECO:0000305" key="11">
    <source>
    </source>
</evidence>
<evidence type="ECO:0000312" key="12">
    <source>
        <dbReference type="EMBL" id="BAA10652.1"/>
    </source>
</evidence>
<organism>
    <name type="scientific">Synechocystis sp. (strain ATCC 27184 / PCC 6803 / Kazusa)</name>
    <dbReference type="NCBI Taxonomy" id="1111708"/>
    <lineage>
        <taxon>Bacteria</taxon>
        <taxon>Bacillati</taxon>
        <taxon>Cyanobacteriota</taxon>
        <taxon>Cyanophyceae</taxon>
        <taxon>Synechococcales</taxon>
        <taxon>Merismopediaceae</taxon>
        <taxon>Synechocystis</taxon>
    </lineage>
</organism>
<accession>Q55890</accession>
<comment type="function">
    <text evidence="1">Response regulator of 2 two-component regulatory systems SasA/RpaA and CikA/RpaA involved in genome-wide circadian gene expression. The histidine kinases have opposing effects modulated by the clock oscillator proteins; SasA phosphorylates RpaA (stimulated by fully phosphorylated KaiC1) while CikA dephosphorylates phospho-RpaA (stimulated by the phospho-Ser-432-KaiC1-KaiB complex).</text>
</comment>
<comment type="function">
    <text evidence="6 7 8 9">The RpaA regulon is about 300 genes, and includes itself, cikA, sigE, sigG, genes involved in photosynthesis, carbon metabolism in the light and dark, phototaxis, CRISPR arrays 2 and 3 as well as nearly 90 ncRNAs. Genes are up- or down-regulated in its absence (PubMed:30216574). Involved in regulation of primary sugar and amino acid metabolism and in adaptation to light changes (PubMed:26379657). Regulates the accumulation of the monomeric photosystem I and the D1 protein under high light conditions (PubMed:23024802). Overexpression causes cells to grow more slowly, increases levels of transcripts for clock oscillator genes in the light and the dark, increases levels of SigE protein, increases accumulation of sugar catabolic enzymes in the dark with concomitant decreases in most sugar metabolites (PubMed:26379657). Plays a role in cell division; overexpression from the psbAII promoter increases expression of some cell-division-related genes, alters cell volume and changes the outer cell membrane and cell wall appearance (PubMed:32173680).</text>
</comment>
<comment type="subunit">
    <text evidence="5 8">Interacts with reduced ferredoxin (petF) (PubMed:20869472). Interacts with CikA, RpaB, SasA, Sll0038 (pixG) and a number of other proteins (PubMed:30216574).</text>
</comment>
<comment type="subcellular location">
    <subcellularLocation>
        <location evidence="11">Cytoplasm</location>
    </subcellularLocation>
</comment>
<comment type="PTM">
    <text evidence="1">Phosphorylated by SasA; phosphorylation is maximal when KaiC phosphorylation is active during the circadian cycle. Dephosphorylated by CikA. CikA and SasA cooperation generates RpaA activity oscillation that is distinct from that generated by CikA or SasA alone and offset from the rhythm of KaiC phosphorylation.</text>
</comment>
<comment type="disruption phenotype">
    <text evidence="4 6 8">Increased efficiency of energy transfer from phycobilisomes to photosystem II (PSII) relative to photosystem I (PSI), decreased PSII/PSI ratio, content of phycobilisomes is increased (PubMed:10585546). Normal growth under 50 umol photons/m(2)/s, slow growth and slight bleaching under high light (400 umol photons/m(2)/s). Under high light, decreased chlorophyll content and overall oxygen evolution, no significant changes in transcription of genes involved in photosynthesis or high light inducible polypeptides (PubMed:23024802). Poor growth in light/dark cycles, especially under mixotrophic conditions, no growth on glucose in the dark after 12 days (chemoheterotrophic growth). Reduced phycocyanin to chlorophyll ratio. Altered expression of about 300 genes, including ncRNAs (PubMed:30216574).</text>
</comment>
<name>RPAA_SYNY3</name>
<sequence length="241" mass="27276">MPRILIIDDDPAISDLVSINLEMAGYDVQQAVDGIKGQALAVQLQPDLIMLDLMLPKVDGFTVCQRLRRDERTADIPVLMLTALGQIQDKIQGFDSGADDYLTKPFDVEEMLARVRALLRRTDRIPQAAKHSEILNQGPLTLVPERFEAIWFGKSIKLTHLEFELLHCLLQRHGQTVSPSDILREVWGYEPDDDIETIRVHIRHLRTKLEPNPRRPRFIKTVYGAGYCLELSTEEGGGSPT</sequence>
<gene>
    <name evidence="10" type="primary">rpaA</name>
    <name evidence="12" type="ordered locus">slr0115</name>
</gene>
<proteinExistence type="evidence at protein level"/>
<feature type="chain" id="PRO_0000457280" description="DNA-binding dual master transcriptional regulator RpaA">
    <location>
        <begin position="1"/>
        <end position="241"/>
    </location>
</feature>
<feature type="domain" description="Response regulatory" evidence="2">
    <location>
        <begin position="3"/>
        <end position="119"/>
    </location>
</feature>
<feature type="DNA-binding region" description="OmpR/PhoB-type" evidence="3">
    <location>
        <begin position="132"/>
        <end position="231"/>
    </location>
</feature>
<feature type="modified residue" description="4-aspartylphosphate" evidence="2">
    <location>
        <position position="52"/>
    </location>
</feature>
<keyword id="KW-0010">Activator</keyword>
<keyword id="KW-0090">Biological rhythms</keyword>
<keyword id="KW-0131">Cell cycle</keyword>
<keyword id="KW-0132">Cell division</keyword>
<keyword id="KW-0963">Cytoplasm</keyword>
<keyword id="KW-0238">DNA-binding</keyword>
<keyword id="KW-0597">Phosphoprotein</keyword>
<keyword id="KW-1185">Reference proteome</keyword>
<keyword id="KW-0678">Repressor</keyword>
<keyword id="KW-0804">Transcription</keyword>
<keyword id="KW-0805">Transcription regulation</keyword>
<keyword id="KW-0902">Two-component regulatory system</keyword>
<dbReference type="EMBL" id="BA000022">
    <property type="protein sequence ID" value="BAA10652.1"/>
    <property type="molecule type" value="Genomic_DNA"/>
</dbReference>
<dbReference type="PIR" id="S76708">
    <property type="entry name" value="S76708"/>
</dbReference>
<dbReference type="SMR" id="Q55890"/>
<dbReference type="IntAct" id="Q55890">
    <property type="interactions" value="1"/>
</dbReference>
<dbReference type="STRING" id="1148.gene:10500157"/>
<dbReference type="PaxDb" id="1148-1208484"/>
<dbReference type="PRIDE" id="Q55890"/>
<dbReference type="EnsemblBacteria" id="BAA10652">
    <property type="protein sequence ID" value="BAA10652"/>
    <property type="gene ID" value="BAA10652"/>
</dbReference>
<dbReference type="KEGG" id="syn:slr0115"/>
<dbReference type="eggNOG" id="COG0745">
    <property type="taxonomic scope" value="Bacteria"/>
</dbReference>
<dbReference type="InParanoid" id="Q55890"/>
<dbReference type="PhylomeDB" id="Q55890"/>
<dbReference type="Proteomes" id="UP000001425">
    <property type="component" value="Chromosome"/>
</dbReference>
<dbReference type="GO" id="GO:0005829">
    <property type="term" value="C:cytosol"/>
    <property type="evidence" value="ECO:0000318"/>
    <property type="project" value="GO_Central"/>
</dbReference>
<dbReference type="GO" id="GO:0032993">
    <property type="term" value="C:protein-DNA complex"/>
    <property type="evidence" value="ECO:0000318"/>
    <property type="project" value="GO_Central"/>
</dbReference>
<dbReference type="GO" id="GO:0000156">
    <property type="term" value="F:phosphorelay response regulator activity"/>
    <property type="evidence" value="ECO:0000318"/>
    <property type="project" value="GO_Central"/>
</dbReference>
<dbReference type="GO" id="GO:0000976">
    <property type="term" value="F:transcription cis-regulatory region binding"/>
    <property type="evidence" value="ECO:0000318"/>
    <property type="project" value="GO_Central"/>
</dbReference>
<dbReference type="GO" id="GO:0051301">
    <property type="term" value="P:cell division"/>
    <property type="evidence" value="ECO:0007669"/>
    <property type="project" value="UniProtKB-KW"/>
</dbReference>
<dbReference type="GO" id="GO:0097167">
    <property type="term" value="P:circadian regulation of translation"/>
    <property type="evidence" value="ECO:0000315"/>
    <property type="project" value="UniProtKB"/>
</dbReference>
<dbReference type="GO" id="GO:0007623">
    <property type="term" value="P:circadian rhythm"/>
    <property type="evidence" value="ECO:0000315"/>
    <property type="project" value="UniProtKB"/>
</dbReference>
<dbReference type="GO" id="GO:0006355">
    <property type="term" value="P:regulation of DNA-templated transcription"/>
    <property type="evidence" value="ECO:0000318"/>
    <property type="project" value="GO_Central"/>
</dbReference>
<dbReference type="CDD" id="cd00383">
    <property type="entry name" value="trans_reg_C"/>
    <property type="match status" value="1"/>
</dbReference>
<dbReference type="FunFam" id="3.40.50.2300:FF:000001">
    <property type="entry name" value="DNA-binding response regulator PhoB"/>
    <property type="match status" value="1"/>
</dbReference>
<dbReference type="FunFam" id="1.10.10.10:FF:001124">
    <property type="entry name" value="Two-component response regulator"/>
    <property type="match status" value="1"/>
</dbReference>
<dbReference type="Gene3D" id="3.40.50.2300">
    <property type="match status" value="1"/>
</dbReference>
<dbReference type="Gene3D" id="6.10.250.690">
    <property type="match status" value="1"/>
</dbReference>
<dbReference type="Gene3D" id="1.10.10.10">
    <property type="entry name" value="Winged helix-like DNA-binding domain superfamily/Winged helix DNA-binding domain"/>
    <property type="match status" value="1"/>
</dbReference>
<dbReference type="InterPro" id="IPR011006">
    <property type="entry name" value="CheY-like_superfamily"/>
</dbReference>
<dbReference type="InterPro" id="IPR001867">
    <property type="entry name" value="OmpR/PhoB-type_DNA-bd"/>
</dbReference>
<dbReference type="InterPro" id="IPR016032">
    <property type="entry name" value="Sig_transdc_resp-reg_C-effctor"/>
</dbReference>
<dbReference type="InterPro" id="IPR001789">
    <property type="entry name" value="Sig_transdc_resp-reg_receiver"/>
</dbReference>
<dbReference type="InterPro" id="IPR039420">
    <property type="entry name" value="WalR-like"/>
</dbReference>
<dbReference type="InterPro" id="IPR036388">
    <property type="entry name" value="WH-like_DNA-bd_sf"/>
</dbReference>
<dbReference type="PANTHER" id="PTHR48111:SF21">
    <property type="entry name" value="DNA-BINDING DUAL MASTER TRANSCRIPTIONAL REGULATOR RPAA"/>
    <property type="match status" value="1"/>
</dbReference>
<dbReference type="PANTHER" id="PTHR48111">
    <property type="entry name" value="REGULATOR OF RPOS"/>
    <property type="match status" value="1"/>
</dbReference>
<dbReference type="Pfam" id="PF00072">
    <property type="entry name" value="Response_reg"/>
    <property type="match status" value="1"/>
</dbReference>
<dbReference type="Pfam" id="PF00486">
    <property type="entry name" value="Trans_reg_C"/>
    <property type="match status" value="1"/>
</dbReference>
<dbReference type="SMART" id="SM00448">
    <property type="entry name" value="REC"/>
    <property type="match status" value="1"/>
</dbReference>
<dbReference type="SMART" id="SM00862">
    <property type="entry name" value="Trans_reg_C"/>
    <property type="match status" value="1"/>
</dbReference>
<dbReference type="SUPFAM" id="SSF46894">
    <property type="entry name" value="C-terminal effector domain of the bipartite response regulators"/>
    <property type="match status" value="1"/>
</dbReference>
<dbReference type="SUPFAM" id="SSF52172">
    <property type="entry name" value="CheY-like"/>
    <property type="match status" value="1"/>
</dbReference>
<dbReference type="PROSITE" id="PS51755">
    <property type="entry name" value="OMPR_PHOB"/>
    <property type="match status" value="1"/>
</dbReference>
<dbReference type="PROSITE" id="PS50110">
    <property type="entry name" value="RESPONSE_REGULATORY"/>
    <property type="match status" value="1"/>
</dbReference>
<protein>
    <recommendedName>
        <fullName evidence="1">DNA-binding dual master transcriptional regulator RpaA</fullName>
    </recommendedName>
    <alternativeName>
        <fullName evidence="10">Regulator of phycobilisome-associated protein A</fullName>
        <shortName evidence="10">RpaA</shortName>
    </alternativeName>
</protein>
<reference evidence="12" key="1">
    <citation type="journal article" date="1996" name="DNA Res.">
        <title>Sequence analysis of the genome of the unicellular cyanobacterium Synechocystis sp. strain PCC6803. II. Sequence determination of the entire genome and assignment of potential protein-coding regions.</title>
        <authorList>
            <person name="Kaneko T."/>
            <person name="Sato S."/>
            <person name="Kotani H."/>
            <person name="Tanaka A."/>
            <person name="Asamizu E."/>
            <person name="Nakamura Y."/>
            <person name="Miyajima N."/>
            <person name="Hirosawa M."/>
            <person name="Sugiura M."/>
            <person name="Sasamoto S."/>
            <person name="Kimura T."/>
            <person name="Hosouchi T."/>
            <person name="Matsuno A."/>
            <person name="Muraki A."/>
            <person name="Nakazaki N."/>
            <person name="Naruo K."/>
            <person name="Okumura S."/>
            <person name="Shimpo S."/>
            <person name="Takeuchi C."/>
            <person name="Wada T."/>
            <person name="Watanabe A."/>
            <person name="Yamada M."/>
            <person name="Yasuda M."/>
            <person name="Tabata S."/>
        </authorList>
    </citation>
    <scope>NUCLEOTIDE SEQUENCE [LARGE SCALE GENOMIC DNA]</scope>
    <source>
        <strain>ATCC 27184 / PCC 6803 / Kazusa</strain>
    </source>
</reference>
<reference key="2">
    <citation type="journal article" date="1999" name="FEMS Microbiol. Lett.">
        <title>Cyanobacterial ycf27 gene products regulate energy transfer from phycobilisomes to photosystems I and II.</title>
        <authorList>
            <person name="Ashby M.K."/>
            <person name="Mullineaux C.W."/>
        </authorList>
    </citation>
    <scope>NOMENCLATURE</scope>
    <scope>DISRUPTION PHENOTYPE</scope>
    <source>
        <strain>ATCC 27184 / PCC 6803 / Kazusa</strain>
    </source>
</reference>
<reference key="3">
    <citation type="journal article" date="2011" name="Biochim. Biophys. Acta">
        <title>A screen for potential ferredoxin electron transfer partners uncovers new, redox dependent interactions.</title>
        <authorList>
            <person name="Hanke G.T."/>
            <person name="Satomi Y."/>
            <person name="Shinmura K."/>
            <person name="Takao T."/>
            <person name="Hase T."/>
        </authorList>
    </citation>
    <scope>IDENTIFICATION BY MASS SPECTROMETRY</scope>
    <scope>INTERACTION WITH FERREDOXIN (PETF)</scope>
    <scope>SUBCELLULAR LOCATION</scope>
    <source>
        <strain>ATCC 27184 / PCC 6803 / Kazusa</strain>
    </source>
</reference>
<reference key="4">
    <citation type="journal article" date="2012" name="PLoS ONE">
        <title>RpaA regulates the accumulation of monomeric photosystem I and PsbA under high light conditions in Synechocystis sp. PCC 6803.</title>
        <authorList>
            <person name="Majeed W."/>
            <person name="Zhang Y."/>
            <person name="Xue Y."/>
            <person name="Ranade S."/>
            <person name="Blue R.N."/>
            <person name="Wang Q."/>
            <person name="He Q."/>
        </authorList>
    </citation>
    <scope>FUNCTION</scope>
    <scope>DISRUPTION PHENOTYPE</scope>
    <source>
        <strain>ATCC 27184 / PCC 6803 / Kazusa</strain>
    </source>
</reference>
<reference key="5">
    <citation type="journal article" date="2015" name="Front. Microbiol.">
        <title>Changes in primary metabolism under light and dark conditions in response to overproduction of a response regulator RpaA in the unicellular cyanobacterium Synechocystis sp. PCC 6803.</title>
        <authorList>
            <person name="Iijima H."/>
            <person name="Shirai T."/>
            <person name="Okamoto M."/>
            <person name="Kondo A."/>
            <person name="Hirai M.Y."/>
            <person name="Osanai T."/>
        </authorList>
    </citation>
    <scope>FUNCTION IN PRIMARY METABOLISM</scope>
    <scope>OVEREXPRESSION</scope>
    <source>
        <strain>ATCC 27184 / PCC 6803 / Kazusa</strain>
    </source>
</reference>
<reference key="6">
    <citation type="journal article" date="2018" name="Mol. Microbiol.">
        <title>The role of the Synechocystis sp. PCC 6803 homolog of the circadian clock output regulator RpaA in day-night transitions.</title>
        <authorList>
            <person name="Koebler C."/>
            <person name="Schultz S.J."/>
            <person name="Kopp D."/>
            <person name="Voigt K."/>
            <person name="Wilde A."/>
        </authorList>
    </citation>
    <scope>FUNCTION IN DAY-NIGHT TRANSITION</scope>
    <scope>REGULON</scope>
    <scope>INTERACTION WITH CIKA; RPAB; SASA AND SLL0038</scope>
    <scope>DISRUPTION PHENOTYPE</scope>
    <source>
        <strain>ATCC 27184 / PCC 6803 / Kazusa</strain>
    </source>
</reference>
<reference key="7">
    <citation type="journal article" date="2020" name="J. Gen. Appl. Microbiol.">
        <title>Overexpression of the response regulator rpaA causes an impaired cell division in the Cyanobacterium Synechocystis sp. PCC 6803.</title>
        <authorList>
            <person name="Kizawa A."/>
            <person name="Osanai T."/>
        </authorList>
    </citation>
    <scope>FUNCTION IN CELL DIVISION</scope>
    <scope>OVEREXPRESSION</scope>
    <source>
        <strain>ATCC 27184 / PCC 6803 / Kazusa</strain>
    </source>
</reference>